<name>UVRB_LEPIN</name>
<evidence type="ECO:0000255" key="1">
    <source>
        <dbReference type="HAMAP-Rule" id="MF_00204"/>
    </source>
</evidence>
<proteinExistence type="inferred from homology"/>
<feature type="chain" id="PRO_0000138402" description="UvrABC system protein B">
    <location>
        <begin position="1"/>
        <end position="666"/>
    </location>
</feature>
<feature type="domain" description="Helicase ATP-binding" evidence="1">
    <location>
        <begin position="26"/>
        <end position="414"/>
    </location>
</feature>
<feature type="domain" description="Helicase C-terminal" evidence="1">
    <location>
        <begin position="429"/>
        <end position="591"/>
    </location>
</feature>
<feature type="domain" description="UVR" evidence="1">
    <location>
        <begin position="625"/>
        <end position="660"/>
    </location>
</feature>
<feature type="short sequence motif" description="Beta-hairpin">
    <location>
        <begin position="92"/>
        <end position="115"/>
    </location>
</feature>
<feature type="binding site" evidence="1">
    <location>
        <begin position="39"/>
        <end position="46"/>
    </location>
    <ligand>
        <name>ATP</name>
        <dbReference type="ChEBI" id="CHEBI:30616"/>
    </ligand>
</feature>
<dbReference type="EMBL" id="AE010300">
    <property type="protein sequence ID" value="AAN47848.1"/>
    <property type="molecule type" value="Genomic_DNA"/>
</dbReference>
<dbReference type="RefSeq" id="NP_710830.1">
    <property type="nucleotide sequence ID" value="NC_004342.2"/>
</dbReference>
<dbReference type="RefSeq" id="WP_000179030.1">
    <property type="nucleotide sequence ID" value="NC_004342.2"/>
</dbReference>
<dbReference type="SMR" id="Q8F8A9"/>
<dbReference type="FunCoup" id="Q8F8A9">
    <property type="interactions" value="167"/>
</dbReference>
<dbReference type="STRING" id="189518.LA_0649"/>
<dbReference type="PaxDb" id="189518-LA_0649"/>
<dbReference type="EnsemblBacteria" id="AAN47848">
    <property type="protein sequence ID" value="AAN47848"/>
    <property type="gene ID" value="LA_0649"/>
</dbReference>
<dbReference type="GeneID" id="61142818"/>
<dbReference type="KEGG" id="lil:LA_0649"/>
<dbReference type="PATRIC" id="fig|189518.3.peg.650"/>
<dbReference type="HOGENOM" id="CLU_009621_2_1_12"/>
<dbReference type="InParanoid" id="Q8F8A9"/>
<dbReference type="OrthoDB" id="9806651at2"/>
<dbReference type="Proteomes" id="UP000001408">
    <property type="component" value="Chromosome I"/>
</dbReference>
<dbReference type="GO" id="GO:0005737">
    <property type="term" value="C:cytoplasm"/>
    <property type="evidence" value="ECO:0007669"/>
    <property type="project" value="UniProtKB-SubCell"/>
</dbReference>
<dbReference type="GO" id="GO:0009380">
    <property type="term" value="C:excinuclease repair complex"/>
    <property type="evidence" value="ECO:0000318"/>
    <property type="project" value="GO_Central"/>
</dbReference>
<dbReference type="GO" id="GO:0005524">
    <property type="term" value="F:ATP binding"/>
    <property type="evidence" value="ECO:0007669"/>
    <property type="project" value="UniProtKB-UniRule"/>
</dbReference>
<dbReference type="GO" id="GO:0016887">
    <property type="term" value="F:ATP hydrolysis activity"/>
    <property type="evidence" value="ECO:0007669"/>
    <property type="project" value="InterPro"/>
</dbReference>
<dbReference type="GO" id="GO:0003677">
    <property type="term" value="F:DNA binding"/>
    <property type="evidence" value="ECO:0007669"/>
    <property type="project" value="UniProtKB-UniRule"/>
</dbReference>
<dbReference type="GO" id="GO:0009381">
    <property type="term" value="F:excinuclease ABC activity"/>
    <property type="evidence" value="ECO:0007669"/>
    <property type="project" value="UniProtKB-UniRule"/>
</dbReference>
<dbReference type="GO" id="GO:0000715">
    <property type="term" value="P:nucleotide-excision repair, DNA damage recognition"/>
    <property type="evidence" value="ECO:0000318"/>
    <property type="project" value="GO_Central"/>
</dbReference>
<dbReference type="GO" id="GO:0009432">
    <property type="term" value="P:SOS response"/>
    <property type="evidence" value="ECO:0007669"/>
    <property type="project" value="UniProtKB-UniRule"/>
</dbReference>
<dbReference type="CDD" id="cd17916">
    <property type="entry name" value="DEXHc_UvrB"/>
    <property type="match status" value="1"/>
</dbReference>
<dbReference type="CDD" id="cd18790">
    <property type="entry name" value="SF2_C_UvrB"/>
    <property type="match status" value="1"/>
</dbReference>
<dbReference type="Gene3D" id="3.40.50.300">
    <property type="entry name" value="P-loop containing nucleotide triphosphate hydrolases"/>
    <property type="match status" value="3"/>
</dbReference>
<dbReference type="Gene3D" id="4.10.860.10">
    <property type="entry name" value="UVR domain"/>
    <property type="match status" value="1"/>
</dbReference>
<dbReference type="HAMAP" id="MF_00204">
    <property type="entry name" value="UvrB"/>
    <property type="match status" value="1"/>
</dbReference>
<dbReference type="InterPro" id="IPR006935">
    <property type="entry name" value="Helicase/UvrB_N"/>
</dbReference>
<dbReference type="InterPro" id="IPR014001">
    <property type="entry name" value="Helicase_ATP-bd"/>
</dbReference>
<dbReference type="InterPro" id="IPR001650">
    <property type="entry name" value="Helicase_C-like"/>
</dbReference>
<dbReference type="InterPro" id="IPR027417">
    <property type="entry name" value="P-loop_NTPase"/>
</dbReference>
<dbReference type="InterPro" id="IPR001943">
    <property type="entry name" value="UVR_dom"/>
</dbReference>
<dbReference type="InterPro" id="IPR036876">
    <property type="entry name" value="UVR_dom_sf"/>
</dbReference>
<dbReference type="InterPro" id="IPR004807">
    <property type="entry name" value="UvrB"/>
</dbReference>
<dbReference type="InterPro" id="IPR041471">
    <property type="entry name" value="UvrB_inter"/>
</dbReference>
<dbReference type="InterPro" id="IPR024759">
    <property type="entry name" value="UvrB_YAD/RRR_dom"/>
</dbReference>
<dbReference type="NCBIfam" id="NF003673">
    <property type="entry name" value="PRK05298.1"/>
    <property type="match status" value="1"/>
</dbReference>
<dbReference type="NCBIfam" id="TIGR00631">
    <property type="entry name" value="uvrb"/>
    <property type="match status" value="1"/>
</dbReference>
<dbReference type="PANTHER" id="PTHR24029">
    <property type="entry name" value="UVRABC SYSTEM PROTEIN B"/>
    <property type="match status" value="1"/>
</dbReference>
<dbReference type="PANTHER" id="PTHR24029:SF0">
    <property type="entry name" value="UVRABC SYSTEM PROTEIN B"/>
    <property type="match status" value="1"/>
</dbReference>
<dbReference type="Pfam" id="PF00271">
    <property type="entry name" value="Helicase_C"/>
    <property type="match status" value="1"/>
</dbReference>
<dbReference type="Pfam" id="PF04851">
    <property type="entry name" value="ResIII"/>
    <property type="match status" value="1"/>
</dbReference>
<dbReference type="Pfam" id="PF02151">
    <property type="entry name" value="UVR"/>
    <property type="match status" value="1"/>
</dbReference>
<dbReference type="Pfam" id="PF12344">
    <property type="entry name" value="UvrB"/>
    <property type="match status" value="1"/>
</dbReference>
<dbReference type="Pfam" id="PF17757">
    <property type="entry name" value="UvrB_inter"/>
    <property type="match status" value="1"/>
</dbReference>
<dbReference type="SMART" id="SM00487">
    <property type="entry name" value="DEXDc"/>
    <property type="match status" value="1"/>
</dbReference>
<dbReference type="SMART" id="SM00490">
    <property type="entry name" value="HELICc"/>
    <property type="match status" value="1"/>
</dbReference>
<dbReference type="SUPFAM" id="SSF46600">
    <property type="entry name" value="C-terminal UvrC-binding domain of UvrB"/>
    <property type="match status" value="1"/>
</dbReference>
<dbReference type="SUPFAM" id="SSF52540">
    <property type="entry name" value="P-loop containing nucleoside triphosphate hydrolases"/>
    <property type="match status" value="2"/>
</dbReference>
<dbReference type="PROSITE" id="PS51192">
    <property type="entry name" value="HELICASE_ATP_BIND_1"/>
    <property type="match status" value="1"/>
</dbReference>
<dbReference type="PROSITE" id="PS51194">
    <property type="entry name" value="HELICASE_CTER"/>
    <property type="match status" value="1"/>
</dbReference>
<dbReference type="PROSITE" id="PS50151">
    <property type="entry name" value="UVR"/>
    <property type="match status" value="1"/>
</dbReference>
<organism>
    <name type="scientific">Leptospira interrogans serogroup Icterohaemorrhagiae serovar Lai (strain 56601)</name>
    <dbReference type="NCBI Taxonomy" id="189518"/>
    <lineage>
        <taxon>Bacteria</taxon>
        <taxon>Pseudomonadati</taxon>
        <taxon>Spirochaetota</taxon>
        <taxon>Spirochaetia</taxon>
        <taxon>Leptospirales</taxon>
        <taxon>Leptospiraceae</taxon>
        <taxon>Leptospira</taxon>
    </lineage>
</organism>
<accession>Q8F8A9</accession>
<protein>
    <recommendedName>
        <fullName evidence="1">UvrABC system protein B</fullName>
        <shortName evidence="1">Protein UvrB</shortName>
    </recommendedName>
    <alternativeName>
        <fullName evidence="1">Excinuclease ABC subunit B</fullName>
    </alternativeName>
</protein>
<gene>
    <name evidence="1" type="primary">uvrB</name>
    <name type="ordered locus">LA_0649</name>
</gene>
<reference key="1">
    <citation type="journal article" date="2003" name="Nature">
        <title>Unique physiological and pathogenic features of Leptospira interrogans revealed by whole-genome sequencing.</title>
        <authorList>
            <person name="Ren S.-X."/>
            <person name="Fu G."/>
            <person name="Jiang X.-G."/>
            <person name="Zeng R."/>
            <person name="Miao Y.-G."/>
            <person name="Xu H."/>
            <person name="Zhang Y.-X."/>
            <person name="Xiong H."/>
            <person name="Lu G."/>
            <person name="Lu L.-F."/>
            <person name="Jiang H.-Q."/>
            <person name="Jia J."/>
            <person name="Tu Y.-F."/>
            <person name="Jiang J.-X."/>
            <person name="Gu W.-Y."/>
            <person name="Zhang Y.-Q."/>
            <person name="Cai Z."/>
            <person name="Sheng H.-H."/>
            <person name="Yin H.-F."/>
            <person name="Zhang Y."/>
            <person name="Zhu G.-F."/>
            <person name="Wan M."/>
            <person name="Huang H.-L."/>
            <person name="Qian Z."/>
            <person name="Wang S.-Y."/>
            <person name="Ma W."/>
            <person name="Yao Z.-J."/>
            <person name="Shen Y."/>
            <person name="Qiang B.-Q."/>
            <person name="Xia Q.-C."/>
            <person name="Guo X.-K."/>
            <person name="Danchin A."/>
            <person name="Saint Girons I."/>
            <person name="Somerville R.L."/>
            <person name="Wen Y.-M."/>
            <person name="Shi M.-H."/>
            <person name="Chen Z."/>
            <person name="Xu J.-G."/>
            <person name="Zhao G.-P."/>
        </authorList>
    </citation>
    <scope>NUCLEOTIDE SEQUENCE [LARGE SCALE GENOMIC DNA]</scope>
    <source>
        <strain>56601</strain>
    </source>
</reference>
<comment type="function">
    <text evidence="1">The UvrABC repair system catalyzes the recognition and processing of DNA lesions. A damage recognition complex composed of 2 UvrA and 2 UvrB subunits scans DNA for abnormalities. Upon binding of the UvrA(2)B(2) complex to a putative damaged site, the DNA wraps around one UvrB monomer. DNA wrap is dependent on ATP binding by UvrB and probably causes local melting of the DNA helix, facilitating insertion of UvrB beta-hairpin between the DNA strands. Then UvrB probes one DNA strand for the presence of a lesion. If a lesion is found the UvrA subunits dissociate and the UvrB-DNA preincision complex is formed. This complex is subsequently bound by UvrC and the second UvrB is released. If no lesion is found, the DNA wraps around the other UvrB subunit that will check the other stand for damage.</text>
</comment>
<comment type="subunit">
    <text evidence="1">Forms a heterotetramer with UvrA during the search for lesions. Interacts with UvrC in an incision complex.</text>
</comment>
<comment type="subcellular location">
    <subcellularLocation>
        <location evidence="1">Cytoplasm</location>
    </subcellularLocation>
</comment>
<comment type="domain">
    <text evidence="1">The beta-hairpin motif is involved in DNA binding.</text>
</comment>
<comment type="similarity">
    <text evidence="1">Belongs to the UvrB family.</text>
</comment>
<keyword id="KW-0067">ATP-binding</keyword>
<keyword id="KW-0963">Cytoplasm</keyword>
<keyword id="KW-0227">DNA damage</keyword>
<keyword id="KW-0228">DNA excision</keyword>
<keyword id="KW-0234">DNA repair</keyword>
<keyword id="KW-0267">Excision nuclease</keyword>
<keyword id="KW-0547">Nucleotide-binding</keyword>
<keyword id="KW-1185">Reference proteome</keyword>
<keyword id="KW-0742">SOS response</keyword>
<sequence>MASVFKIHSAYQPAGDQVKAIQNIADSFQKGEKKVTLVGVTGSGKTFTMAQVIQNLGLPTLVLSHNKTLAAQLFREFKEFFPENAVEYFVSYYDYYQPEAYVPSSDTFIEKDSSINEEIDKLRLRATSSLLEREDVVIVSSVSCIYGLGSPEEYTNSVVALKVGDTIERDTVIRKLLHIQYNRNDLDFSRGNFRVRGDSIEIYPAYHTDGIRIEFFGDEIDSISRINPVTAQTIFKLEKAYIYPAKHFITSGPKVKEAVENIRAEVDAQTDFFRKNNKLLEAERILSRTNYDMEMLQEMGYCNGIENYSRHLTGRKPGERPACLIDYFQGEFLLIVDESHVTIPQIGGMFAGDRARKQTLVDFGFRLPSALDNRPLNFQEFETLTPRTLYVSATPAEYEIEKSSKVVEQIIRPTGLLDPIVDVRPTKNQIEDLLVEIRKRIDAGERVLVTTLTKKMSEDLTDYYEEIGLKVAYLHSEVETLDRVGIIRDLRKGIYDVLIGINLLREGLDIPEVSLVAILDADKEGFLRNYKSLIQTIGRAARNVNGTAILYADKTTDSMAKAIEETKRRRKIQEDHNLKFGITPLTIKKEVGDIIEREEKERTSEDLVLEDVEKKFNSKKFPNKEVLKEKLREEMMKAAKELDFERAAILRDKMLSIQTEDSSAKN</sequence>